<dbReference type="EMBL" id="AF198107">
    <property type="protein sequence ID" value="AAF74402.1"/>
    <property type="molecule type" value="Genomic_DNA"/>
</dbReference>
<dbReference type="SMR" id="Q9NCP1"/>
<dbReference type="VEuPathDB" id="GiardiaDB:DHA2_17190"/>
<dbReference type="VEuPathDB" id="GiardiaDB:GL50581_4071"/>
<dbReference type="VEuPathDB" id="GiardiaDB:GL50803_0017190"/>
<dbReference type="VEuPathDB" id="GiardiaDB:QR46_2316"/>
<dbReference type="eggNOG" id="KOG0688">
    <property type="taxonomic scope" value="Eukaryota"/>
</dbReference>
<dbReference type="GO" id="GO:0005737">
    <property type="term" value="C:cytoplasm"/>
    <property type="evidence" value="ECO:0007669"/>
    <property type="project" value="UniProtKB-SubCell"/>
</dbReference>
<dbReference type="GO" id="GO:0003747">
    <property type="term" value="F:translation release factor activity"/>
    <property type="evidence" value="ECO:0007669"/>
    <property type="project" value="InterPro"/>
</dbReference>
<dbReference type="FunFam" id="3.30.1330.30:FF:000032">
    <property type="entry name" value="Eukaryotic peptide chain release factor subunit 1"/>
    <property type="match status" value="1"/>
</dbReference>
<dbReference type="FunFam" id="3.30.960.10:FF:000003">
    <property type="entry name" value="Peptide chain release factor subunit 1"/>
    <property type="match status" value="1"/>
</dbReference>
<dbReference type="Gene3D" id="3.30.1330.30">
    <property type="match status" value="1"/>
</dbReference>
<dbReference type="Gene3D" id="3.30.960.10">
    <property type="entry name" value="eRF1 domain 1"/>
    <property type="match status" value="1"/>
</dbReference>
<dbReference type="Gene3D" id="3.30.420.60">
    <property type="entry name" value="eRF1 domain 2"/>
    <property type="match status" value="1"/>
</dbReference>
<dbReference type="InterPro" id="IPR042226">
    <property type="entry name" value="eFR1_2_sf"/>
</dbReference>
<dbReference type="InterPro" id="IPR005140">
    <property type="entry name" value="eRF1_1_Pelota"/>
</dbReference>
<dbReference type="InterPro" id="IPR024049">
    <property type="entry name" value="eRF1_1_sf"/>
</dbReference>
<dbReference type="InterPro" id="IPR005141">
    <property type="entry name" value="eRF1_2"/>
</dbReference>
<dbReference type="InterPro" id="IPR005142">
    <property type="entry name" value="eRF1_3"/>
</dbReference>
<dbReference type="InterPro" id="IPR004403">
    <property type="entry name" value="Peptide_chain-rel_eRF1/aRF1"/>
</dbReference>
<dbReference type="InterPro" id="IPR029064">
    <property type="entry name" value="Ribosomal_eL30-like_sf"/>
</dbReference>
<dbReference type="NCBIfam" id="TIGR03676">
    <property type="entry name" value="aRF1_eRF1"/>
    <property type="match status" value="1"/>
</dbReference>
<dbReference type="PANTHER" id="PTHR10113">
    <property type="entry name" value="PEPTIDE CHAIN RELEASE FACTOR SUBUNIT 1"/>
    <property type="match status" value="1"/>
</dbReference>
<dbReference type="Pfam" id="PF03463">
    <property type="entry name" value="eRF1_1"/>
    <property type="match status" value="1"/>
</dbReference>
<dbReference type="Pfam" id="PF03464">
    <property type="entry name" value="eRF1_2"/>
    <property type="match status" value="1"/>
</dbReference>
<dbReference type="Pfam" id="PF03465">
    <property type="entry name" value="eRF1_3"/>
    <property type="match status" value="1"/>
</dbReference>
<dbReference type="SMART" id="SM01194">
    <property type="entry name" value="eRF1_1"/>
    <property type="match status" value="1"/>
</dbReference>
<dbReference type="SUPFAM" id="SSF55315">
    <property type="entry name" value="L30e-like"/>
    <property type="match status" value="1"/>
</dbReference>
<dbReference type="SUPFAM" id="SSF55481">
    <property type="entry name" value="N-terminal domain of eukaryotic peptide chain release factor subunit 1, ERF1"/>
    <property type="match status" value="1"/>
</dbReference>
<dbReference type="SUPFAM" id="SSF53137">
    <property type="entry name" value="Translational machinery components"/>
    <property type="match status" value="1"/>
</dbReference>
<gene>
    <name type="primary">ERF1</name>
</gene>
<evidence type="ECO:0000250" key="1"/>
<evidence type="ECO:0000305" key="2"/>
<feature type="chain" id="PRO_0000143154" description="Eukaryotic peptide chain release factor subunit 1">
    <location>
        <begin position="1"/>
        <end position="457"/>
    </location>
</feature>
<sequence length="457" mass="51029">MSINPDAPQSNGEQERQIAIWQLKRTIEKLESYTGSGTSVISLLIPPGEQLSSVTGMLTNEYGTASNIKSRVNKNAVLSAITSAMSRLKLYNRLPPNGLAVYCGEIEEDGKNTKVVIDYTPYKPISNFIYLCDSKFHTEHLRELLTNDDTFGFIIMDGKETLMATLSGTVRTILDRSTVDLPKKHGRGGQSSVRFARLREEARHNYVRKVAERANSLFISSGPTGTNKPIVSGLILGGSADFKNVLSTSAIFDQRLQSIVMKQIDINYGGEQGFNQAIEMAGDTLKDVKLIQEVKLLTEFTENIAKDTKRVCFGITDTIRCLEMSAVEKLIVWDDLPYHRVTLQCVINGETSAPVIKYLLKSQMSNPKYLREVINGEEVQLDIMGDQLLLEWFVDNYKNYGASLEFITNRSAEGTQFCSGFGGIGGLLRWQVDLVEAARFMQESDEDSFMDDLEDFI</sequence>
<proteinExistence type="inferred from homology"/>
<accession>Q9NCP1</accession>
<protein>
    <recommendedName>
        <fullName>Eukaryotic peptide chain release factor subunit 1</fullName>
        <shortName>Eukaryotic release factor 1</shortName>
        <shortName>eRF1</shortName>
    </recommendedName>
</protein>
<organism>
    <name type="scientific">Giardia intestinalis</name>
    <name type="common">Giardia lamblia</name>
    <dbReference type="NCBI Taxonomy" id="5741"/>
    <lineage>
        <taxon>Eukaryota</taxon>
        <taxon>Metamonada</taxon>
        <taxon>Diplomonadida</taxon>
        <taxon>Hexamitidae</taxon>
        <taxon>Giardiinae</taxon>
        <taxon>Giardia</taxon>
    </lineage>
</organism>
<keyword id="KW-0963">Cytoplasm</keyword>
<keyword id="KW-0648">Protein biosynthesis</keyword>
<name>ERF1_GIAIN</name>
<reference key="1">
    <citation type="journal article" date="2000" name="Mol. Biol. Evol.">
        <title>Evolution of the eukaryotic translation termination system: origins of release factors.</title>
        <authorList>
            <person name="Inagaki Y."/>
            <person name="Doolittle W.F."/>
        </authorList>
    </citation>
    <scope>NUCLEOTIDE SEQUENCE [GENOMIC DNA]</scope>
</reference>
<comment type="function">
    <text evidence="1">Directs the termination of nascent peptide synthesis (translation) in response to the termination codons UAA, UAG and UGA.</text>
</comment>
<comment type="subunit">
    <text>Heterodimer of two subunits, one of which binds GTP.</text>
</comment>
<comment type="subcellular location">
    <subcellularLocation>
        <location evidence="1">Cytoplasm</location>
    </subcellularLocation>
</comment>
<comment type="similarity">
    <text evidence="2">Belongs to the eukaryotic release factor 1 family.</text>
</comment>